<comment type="function">
    <text evidence="1">DNA-dependent RNA polymerase catalyzes the transcription of DNA into RNA using the four ribonucleoside triphosphates as substrates.</text>
</comment>
<comment type="catalytic activity">
    <reaction>
        <text>RNA(n) + a ribonucleoside 5'-triphosphate = RNA(n+1) + diphosphate</text>
        <dbReference type="Rhea" id="RHEA:21248"/>
        <dbReference type="Rhea" id="RHEA-COMP:14527"/>
        <dbReference type="Rhea" id="RHEA-COMP:17342"/>
        <dbReference type="ChEBI" id="CHEBI:33019"/>
        <dbReference type="ChEBI" id="CHEBI:61557"/>
        <dbReference type="ChEBI" id="CHEBI:140395"/>
        <dbReference type="EC" id="2.7.7.6"/>
    </reaction>
</comment>
<comment type="subunit">
    <text evidence="1">In plastids the minimal PEP RNA polymerase catalytic core is composed of four subunits: alpha, beta, beta', and beta''. When a (nuclear-encoded) sigma factor is associated with the core the holoenzyme is formed, which can initiate transcription (By similarity).</text>
</comment>
<comment type="subcellular location">
    <subcellularLocation>
        <location>Plastid</location>
        <location>Chloroplast</location>
    </subcellularLocation>
</comment>
<comment type="miscellaneous">
    <text>In L.terrestris the gene for this protein is split in two.</text>
</comment>
<comment type="similarity">
    <text evidence="2">Belongs to the RNA polymerase beta chain family.</text>
</comment>
<sequence length="1142" mass="131864">MEFSVKNKNLLIQNLVEIQQQSFNELLCVGLKRQLLQLNFIENKTRNIKLIFHAKNYKFILPEITPKEAVLKSKTFASALFIPVEYRAKNSIGLYWVLLGHLPFMTKRGHFIINGVPRVVLNQMVRSPGLYYKTTANPQNVSNQVSINDSSHTSPVFYSDIIPNRGTWLRLEIDRKKNIWIRMKRVDKIPMMLFLQALGYDLHCIEKLLYSRKFLNCDYLLNTDHPADSNSALKKIKVEIEQQKVLKLAALEALDDDDPDIAKQLDYIEKTTTPEMGKDFLFQSFFNPASYDLSPIGRFQLNKKLNLSIPSDYTVLTEFDIYFATKELIKRATTMSNSDDIDHLQTRRIRSCGELLEIQLGEGIERLQKTIIDKINNTNLKKFAKHSSTYKRGTSSSIYRQDRQVINTDKNSKFLKNNLPTKFNRITLEPNLLPNGTSFIHKNNKLNQVSSNKLKLLSKKLIYLNLLINQKFIIAKLKSANLLANKSSFDKFLIHLVDESPRQKFVKNKTGLYHKFIPTPEIYIVEPNLNLVDMKSQQKFNLLKMDLYKVGLAESFLKSNLNNLNIYLQMCLRKPNTYFRDISKICSAQITQQLKQKSFLKLLLINPRLISQNNLLVLNRAVNFLKKIQFNLKDSPNLNDYQNFEINKLKAHIFKCQIKTQNNLTCCKYIYIKTKFNYINLPIKQFFFTKRFLITEQKLLLGGKFINSNLALTSLLKLHKFSEVVSNSFLIYNANNPNPNPTSIMSMIRPVNKSEIYRQLNRRFVRSRLQLNVLKSELTNSHSQLIKANNDPIDRELSIQILKQDVQKSNPFNKKGIYNQRFINKKFLDTSQFIDQELLHFLKTHKIFLDRQLTSLKTKQQNEKLKFIKWKKLRNFKNALKNPIQNLITTNAINGALQELFGLNPLSQFMDQINPLSEITHKRRISSMGPGGVNRDNASMDVRSIHPTHYGRICPIETPEGHNAGLVNSPTIYARINNYGFLETPFFKVNSGQIQAKAFYLNAQKEQKFKVSPPDLSCSELQFLPLGPTKIESEVPMRKDFKFQRMAATQIEFIGISPLQMISVATSLIPFLEHDDANRALMGSNMQRQAVPLLIAERPVVGTGLEGRVIADSSYIMQTKQSGVISYVSNEQVIVQTFHLNN</sequence>
<dbReference type="EC" id="2.7.7.6"/>
<dbReference type="EMBL" id="EF506945">
    <property type="protein sequence ID" value="ABO69351.1"/>
    <property type="molecule type" value="Genomic_DNA"/>
</dbReference>
<dbReference type="RefSeq" id="YP_001382216.1">
    <property type="nucleotide sequence ID" value="NC_009681.1"/>
</dbReference>
<dbReference type="GeneID" id="5383722"/>
<dbReference type="GO" id="GO:0009507">
    <property type="term" value="C:chloroplast"/>
    <property type="evidence" value="ECO:0007669"/>
    <property type="project" value="UniProtKB-SubCell"/>
</dbReference>
<dbReference type="GO" id="GO:0000428">
    <property type="term" value="C:DNA-directed RNA polymerase complex"/>
    <property type="evidence" value="ECO:0007669"/>
    <property type="project" value="UniProtKB-KW"/>
</dbReference>
<dbReference type="GO" id="GO:0005739">
    <property type="term" value="C:mitochondrion"/>
    <property type="evidence" value="ECO:0007669"/>
    <property type="project" value="GOC"/>
</dbReference>
<dbReference type="GO" id="GO:0003677">
    <property type="term" value="F:DNA binding"/>
    <property type="evidence" value="ECO:0007669"/>
    <property type="project" value="InterPro"/>
</dbReference>
<dbReference type="GO" id="GO:0003899">
    <property type="term" value="F:DNA-directed RNA polymerase activity"/>
    <property type="evidence" value="ECO:0007669"/>
    <property type="project" value="UniProtKB-EC"/>
</dbReference>
<dbReference type="GO" id="GO:0032549">
    <property type="term" value="F:ribonucleoside binding"/>
    <property type="evidence" value="ECO:0007669"/>
    <property type="project" value="InterPro"/>
</dbReference>
<dbReference type="GO" id="GO:0006351">
    <property type="term" value="P:DNA-templated transcription"/>
    <property type="evidence" value="ECO:0007669"/>
    <property type="project" value="InterPro"/>
</dbReference>
<dbReference type="Gene3D" id="3.90.1100.10">
    <property type="match status" value="3"/>
</dbReference>
<dbReference type="Gene3D" id="3.90.1110.10">
    <property type="entry name" value="RNA polymerase Rpb2, domain 2"/>
    <property type="match status" value="1"/>
</dbReference>
<dbReference type="InterPro" id="IPR015712">
    <property type="entry name" value="DNA-dir_RNA_pol_su2"/>
</dbReference>
<dbReference type="InterPro" id="IPR007642">
    <property type="entry name" value="RNA_pol_Rpb2_2"/>
</dbReference>
<dbReference type="InterPro" id="IPR037034">
    <property type="entry name" value="RNA_pol_Rpb2_2_sf"/>
</dbReference>
<dbReference type="InterPro" id="IPR007645">
    <property type="entry name" value="RNA_pol_Rpb2_3"/>
</dbReference>
<dbReference type="PANTHER" id="PTHR20856">
    <property type="entry name" value="DNA-DIRECTED RNA POLYMERASE I SUBUNIT 2"/>
    <property type="match status" value="1"/>
</dbReference>
<dbReference type="Pfam" id="PF04561">
    <property type="entry name" value="RNA_pol_Rpb2_2"/>
    <property type="match status" value="1"/>
</dbReference>
<dbReference type="Pfam" id="PF04565">
    <property type="entry name" value="RNA_pol_Rpb2_3"/>
    <property type="match status" value="1"/>
</dbReference>
<dbReference type="SUPFAM" id="SSF64484">
    <property type="entry name" value="beta and beta-prime subunits of DNA dependent RNA-polymerase"/>
    <property type="match status" value="2"/>
</dbReference>
<protein>
    <recommendedName>
        <fullName>DNA-directed RNA polymerase subunit beta N-terminal section</fullName>
        <ecNumber>2.7.7.6</ecNumber>
    </recommendedName>
    <alternativeName>
        <fullName>PEP</fullName>
    </alternativeName>
    <alternativeName>
        <fullName>Plastid-encoded RNA polymerase subunit beta N-terminal section</fullName>
        <shortName>RNA polymerase subunit beta N-terminal section</shortName>
    </alternativeName>
</protein>
<reference key="1">
    <citation type="journal article" date="2007" name="BMC Genomics">
        <title>The chloroplast genome sequence of the green alga Leptosira terrestris: multiple losses of the inverted repeat and extensive genome rearrangements within the Trebouxiophyceae.</title>
        <authorList>
            <person name="de Cambiaire J.-C."/>
            <person name="Otis C."/>
            <person name="Turmel M."/>
            <person name="Lemieux C."/>
        </authorList>
    </citation>
    <scope>NUCLEOTIDE SEQUENCE [LARGE SCALE GENOMIC DNA]</scope>
    <source>
        <strain>CCAP 463/2 / UTEX 333</strain>
    </source>
</reference>
<geneLocation type="chloroplast"/>
<evidence type="ECO:0000250" key="1"/>
<evidence type="ECO:0000305" key="2"/>
<proteinExistence type="inferred from homology"/>
<keyword id="KW-0150">Chloroplast</keyword>
<keyword id="KW-0240">DNA-directed RNA polymerase</keyword>
<keyword id="KW-0548">Nucleotidyltransferase</keyword>
<keyword id="KW-0934">Plastid</keyword>
<keyword id="KW-0804">Transcription</keyword>
<keyword id="KW-0808">Transferase</keyword>
<gene>
    <name type="primary">rpoB1</name>
    <name type="synonym">rpoBa</name>
</gene>
<name>RPOB1_PLETE</name>
<organism>
    <name type="scientific">Pleurastrum terricola</name>
    <name type="common">Filamentous green alga</name>
    <name type="synonym">Leptosira terrestris</name>
    <dbReference type="NCBI Taxonomy" id="34116"/>
    <lineage>
        <taxon>Eukaryota</taxon>
        <taxon>Viridiplantae</taxon>
        <taxon>Chlorophyta</taxon>
        <taxon>core chlorophytes</taxon>
        <taxon>Chlorophyceae</taxon>
        <taxon>CS clade</taxon>
        <taxon>Chlamydomonadales</taxon>
        <taxon>Pleurastraceae</taxon>
        <taxon>Pleurastrum</taxon>
    </lineage>
</organism>
<feature type="chain" id="PRO_0000308257" description="DNA-directed RNA polymerase subunit beta N-terminal section">
    <location>
        <begin position="1"/>
        <end position="1142"/>
    </location>
</feature>
<accession>A6YGD9</accession>